<name>ZNT10_HUMAN</name>
<accession>Q6XR72</accession>
<accession>Q49AL9</accession>
<accession>Q9NPW0</accession>
<sequence>MGRYSGKTCRLLFMLVLTVAFFVAELVSGYLGNSIALLSDSFNMLSDLISLCVGLSAGYIARRPTRGFSATYGYARAEVVGALSNAVFLTALCFTIFVEAVLRLARPERIDDPELVLIVGVLGLLVNVVGLLIFQDCAAWFACCLRGRSRRLQQRQQLAEGCVPGAFGGPQGAEDPRRAADPTAPGSDSAVTLRGTSVERKREKGATVFANVAGDSFNTQNEPEDMMKKEKKSEALNIRGVLLHVMGDALGSVVVVITAIIFYVLPLKSEDPCNWQCYIDPSLTVLMVIIILSSAFPLIKETAAILLQMVPKGVNMEELMSKLSAVPGISSVHEVHIWELVSGKIIATLHIKYPKDRGYQDASTKIREIFHHAGIHNVTIQFENVDLKEPLEQKDLLLLCNSPCISKGCAKQLCCPPGALPLAHVNGCAEHNGGPSLDTYGSDGLSRRDAREVAIEVSLDSCLSDHGQSLNKTQEDQCYVNRTHF</sequence>
<reference key="1">
    <citation type="submission" date="2003-01" db="EMBL/GenBank/DDBJ databases">
        <title>Characterization of a novel mammalian zinc transporter, ZNT8.</title>
        <authorList>
            <person name="Huang L."/>
            <person name="Zhou B."/>
            <person name="Gitschier J."/>
        </authorList>
    </citation>
    <scope>NUCLEOTIDE SEQUENCE [MRNA] (ISOFORM 1)</scope>
</reference>
<reference key="2">
    <citation type="journal article" date="2007" name="BMC Genomics">
        <title>The full-ORF clone resource of the German cDNA consortium.</title>
        <authorList>
            <person name="Bechtel S."/>
            <person name="Rosenfelder H."/>
            <person name="Duda A."/>
            <person name="Schmidt C.P."/>
            <person name="Ernst U."/>
            <person name="Wellenreuther R."/>
            <person name="Mehrle A."/>
            <person name="Schuster C."/>
            <person name="Bahr A."/>
            <person name="Bloecker H."/>
            <person name="Heubner D."/>
            <person name="Hoerlein A."/>
            <person name="Michel G."/>
            <person name="Wedler H."/>
            <person name="Koehrer K."/>
            <person name="Ottenwaelder B."/>
            <person name="Poustka A."/>
            <person name="Wiemann S."/>
            <person name="Schupp I."/>
        </authorList>
    </citation>
    <scope>NUCLEOTIDE SEQUENCE [LARGE SCALE MRNA] (ISOFORM 2)</scope>
    <source>
        <tissue>Brain</tissue>
    </source>
</reference>
<reference key="3">
    <citation type="journal article" date="2006" name="Nature">
        <title>The DNA sequence and biological annotation of human chromosome 1.</title>
        <authorList>
            <person name="Gregory S.G."/>
            <person name="Barlow K.F."/>
            <person name="McLay K.E."/>
            <person name="Kaul R."/>
            <person name="Swarbreck D."/>
            <person name="Dunham A."/>
            <person name="Scott C.E."/>
            <person name="Howe K.L."/>
            <person name="Woodfine K."/>
            <person name="Spencer C.C.A."/>
            <person name="Jones M.C."/>
            <person name="Gillson C."/>
            <person name="Searle S."/>
            <person name="Zhou Y."/>
            <person name="Kokocinski F."/>
            <person name="McDonald L."/>
            <person name="Evans R."/>
            <person name="Phillips K."/>
            <person name="Atkinson A."/>
            <person name="Cooper R."/>
            <person name="Jones C."/>
            <person name="Hall R.E."/>
            <person name="Andrews T.D."/>
            <person name="Lloyd C."/>
            <person name="Ainscough R."/>
            <person name="Almeida J.P."/>
            <person name="Ambrose K.D."/>
            <person name="Anderson F."/>
            <person name="Andrew R.W."/>
            <person name="Ashwell R.I.S."/>
            <person name="Aubin K."/>
            <person name="Babbage A.K."/>
            <person name="Bagguley C.L."/>
            <person name="Bailey J."/>
            <person name="Beasley H."/>
            <person name="Bethel G."/>
            <person name="Bird C.P."/>
            <person name="Bray-Allen S."/>
            <person name="Brown J.Y."/>
            <person name="Brown A.J."/>
            <person name="Buckley D."/>
            <person name="Burton J."/>
            <person name="Bye J."/>
            <person name="Carder C."/>
            <person name="Chapman J.C."/>
            <person name="Clark S.Y."/>
            <person name="Clarke G."/>
            <person name="Clee C."/>
            <person name="Cobley V."/>
            <person name="Collier R.E."/>
            <person name="Corby N."/>
            <person name="Coville G.J."/>
            <person name="Davies J."/>
            <person name="Deadman R."/>
            <person name="Dunn M."/>
            <person name="Earthrowl M."/>
            <person name="Ellington A.G."/>
            <person name="Errington H."/>
            <person name="Frankish A."/>
            <person name="Frankland J."/>
            <person name="French L."/>
            <person name="Garner P."/>
            <person name="Garnett J."/>
            <person name="Gay L."/>
            <person name="Ghori M.R.J."/>
            <person name="Gibson R."/>
            <person name="Gilby L.M."/>
            <person name="Gillett W."/>
            <person name="Glithero R.J."/>
            <person name="Grafham D.V."/>
            <person name="Griffiths C."/>
            <person name="Griffiths-Jones S."/>
            <person name="Grocock R."/>
            <person name="Hammond S."/>
            <person name="Harrison E.S.I."/>
            <person name="Hart E."/>
            <person name="Haugen E."/>
            <person name="Heath P.D."/>
            <person name="Holmes S."/>
            <person name="Holt K."/>
            <person name="Howden P.J."/>
            <person name="Hunt A.R."/>
            <person name="Hunt S.E."/>
            <person name="Hunter G."/>
            <person name="Isherwood J."/>
            <person name="James R."/>
            <person name="Johnson C."/>
            <person name="Johnson D."/>
            <person name="Joy A."/>
            <person name="Kay M."/>
            <person name="Kershaw J.K."/>
            <person name="Kibukawa M."/>
            <person name="Kimberley A.M."/>
            <person name="King A."/>
            <person name="Knights A.J."/>
            <person name="Lad H."/>
            <person name="Laird G."/>
            <person name="Lawlor S."/>
            <person name="Leongamornlert D.A."/>
            <person name="Lloyd D.M."/>
            <person name="Loveland J."/>
            <person name="Lovell J."/>
            <person name="Lush M.J."/>
            <person name="Lyne R."/>
            <person name="Martin S."/>
            <person name="Mashreghi-Mohammadi M."/>
            <person name="Matthews L."/>
            <person name="Matthews N.S.W."/>
            <person name="McLaren S."/>
            <person name="Milne S."/>
            <person name="Mistry S."/>
            <person name="Moore M.J.F."/>
            <person name="Nickerson T."/>
            <person name="O'Dell C.N."/>
            <person name="Oliver K."/>
            <person name="Palmeiri A."/>
            <person name="Palmer S.A."/>
            <person name="Parker A."/>
            <person name="Patel D."/>
            <person name="Pearce A.V."/>
            <person name="Peck A.I."/>
            <person name="Pelan S."/>
            <person name="Phelps K."/>
            <person name="Phillimore B.J."/>
            <person name="Plumb R."/>
            <person name="Rajan J."/>
            <person name="Raymond C."/>
            <person name="Rouse G."/>
            <person name="Saenphimmachak C."/>
            <person name="Sehra H.K."/>
            <person name="Sheridan E."/>
            <person name="Shownkeen R."/>
            <person name="Sims S."/>
            <person name="Skuce C.D."/>
            <person name="Smith M."/>
            <person name="Steward C."/>
            <person name="Subramanian S."/>
            <person name="Sycamore N."/>
            <person name="Tracey A."/>
            <person name="Tromans A."/>
            <person name="Van Helmond Z."/>
            <person name="Wall M."/>
            <person name="Wallis J.M."/>
            <person name="White S."/>
            <person name="Whitehead S.L."/>
            <person name="Wilkinson J.E."/>
            <person name="Willey D.L."/>
            <person name="Williams H."/>
            <person name="Wilming L."/>
            <person name="Wray P.W."/>
            <person name="Wu Z."/>
            <person name="Coulson A."/>
            <person name="Vaudin M."/>
            <person name="Sulston J.E."/>
            <person name="Durbin R.M."/>
            <person name="Hubbard T."/>
            <person name="Wooster R."/>
            <person name="Dunham I."/>
            <person name="Carter N.P."/>
            <person name="McVean G."/>
            <person name="Ross M.T."/>
            <person name="Harrow J."/>
            <person name="Olson M.V."/>
            <person name="Beck S."/>
            <person name="Rogers J."/>
            <person name="Bentley D.R."/>
        </authorList>
    </citation>
    <scope>NUCLEOTIDE SEQUENCE [LARGE SCALE GENOMIC DNA]</scope>
</reference>
<reference key="4">
    <citation type="journal article" date="2004" name="Genome Res.">
        <title>The status, quality, and expansion of the NIH full-length cDNA project: the Mammalian Gene Collection (MGC).</title>
        <authorList>
            <consortium name="The MGC Project Team"/>
        </authorList>
    </citation>
    <scope>NUCLEOTIDE SEQUENCE [LARGE SCALE MRNA] OF 90-485 (ISOFORM 3)</scope>
    <source>
        <tissue>Brain</tissue>
    </source>
</reference>
<reference key="5">
    <citation type="journal article" date="2004" name="BMC Genomics">
        <title>In silico identification and expression of SLC30 family genes: an expressed sequence tag data mining strategy for the characterization of zinc transporters' tissue expression.</title>
        <authorList>
            <person name="Seve M."/>
            <person name="Chimienti F."/>
            <person name="Devergnas S."/>
            <person name="Favier A."/>
        </authorList>
    </citation>
    <scope>TISSUE SPECIFICITY</scope>
</reference>
<reference key="6">
    <citation type="journal article" date="2012" name="Am. J. Hum. Genet.">
        <title>Syndrome of hepatic cirrhosis, dystonia, polycythemia, and hypermanganesemia caused by mutations in SLC30A10, a manganese transporter in man.</title>
        <authorList>
            <person name="Tuschl K."/>
            <person name="Clayton P.T."/>
            <person name="Gospe S.M. Jr."/>
            <person name="Gulab S."/>
            <person name="Ibrahim S."/>
            <person name="Singhi P."/>
            <person name="Aulakh R."/>
            <person name="Ribeiro R.T."/>
            <person name="Barsottini O.G."/>
            <person name="Zaki M.S."/>
            <person name="Del Rosario M.L."/>
            <person name="Dyack S."/>
            <person name="Price V."/>
            <person name="Rideout A."/>
            <person name="Gordon K."/>
            <person name="Wevers R.A."/>
            <person name="Chong W.K."/>
            <person name="Mills P.B."/>
        </authorList>
    </citation>
    <scope>FUNCTION</scope>
    <scope>INVOLVEMENT IN HMNDYT1</scope>
    <scope>VARIANTS HMNDYT1 PRO-89; 105-ALA--PRO-107 DEL; VAL-256 DEL AND PRO-349</scope>
    <scope>CHARACTERIZATION OF VARIANTS HMNDYT1 PRO-89</scope>
</reference>
<reference key="7">
    <citation type="journal article" date="2012" name="Am. J. Hum. Genet.">
        <title>Mutations in SLC30A10 cause parkinsonism and dystonia with hypermanganesemia, polycythemia, and chronic liver disease.</title>
        <authorList>
            <person name="Quadri M."/>
            <person name="Federico A."/>
            <person name="Zhao T."/>
            <person name="Breedveld G.J."/>
            <person name="Battisti C."/>
            <person name="Delnooz C."/>
            <person name="Severijnen L.A."/>
            <person name="Di Toro Mammarella L."/>
            <person name="Mignarri A."/>
            <person name="Monti L."/>
            <person name="Sanna A."/>
            <person name="Lu P."/>
            <person name="Punzo F."/>
            <person name="Cossu G."/>
            <person name="Willemsen R."/>
            <person name="Rasi F."/>
            <person name="Oostra B.A."/>
            <person name="van de Warrenburg B.P."/>
            <person name="Bonifati V."/>
        </authorList>
    </citation>
    <scope>INVOLVEMENT IN HMNDYT1</scope>
    <scope>VARIANT SER-167</scope>
    <scope>INDUCTION BY MANGANESE</scope>
    <scope>TISSUE SPECIFICITY</scope>
</reference>
<reference key="8">
    <citation type="journal article" date="2012" name="Metallomics">
        <title>Efflux function, tissue-specific expression and intracellular trafficking of the Zn transporter ZnT10 indicate roles in adult Zn homeostasis.</title>
        <authorList>
            <person name="Bosomworth H.J."/>
            <person name="Thornton J.K."/>
            <person name="Coneyworth L.J."/>
            <person name="Ford D."/>
            <person name="Valentine R.A."/>
        </authorList>
    </citation>
    <scope>SUBCELLULAR LOCATION</scope>
    <scope>TISSUE SPECIFICITY</scope>
    <scope>INDUCTION</scope>
</reference>
<reference key="9">
    <citation type="journal article" date="2012" name="PLoS ONE">
        <title>Angiotensin II requires zinc and downregulation of the zinc transporters ZnT3 and ZnT10 to induce senescence of vascular smooth muscle cells.</title>
        <authorList>
            <person name="Patrushev N."/>
            <person name="Seidel-Rogol B."/>
            <person name="Salazar G."/>
        </authorList>
    </citation>
    <scope>FUNCTION</scope>
    <scope>TRANSPORTER ACTIVITY</scope>
    <scope>SUBCELLULAR LOCATION</scope>
    <scope>INTERACTION WITH SLC30A3</scope>
    <scope>INDUCTION</scope>
</reference>
<reference key="10">
    <citation type="journal article" date="2014" name="J. Neurosci.">
        <title>SLC30A10 is a cell surface-localized manganese efflux transporter, and parkinsonism-causing mutations block its intracellular trafficking and efflux activity.</title>
        <authorList>
            <person name="Leyva-Illades D."/>
            <person name="Chen P."/>
            <person name="Zogzas C.E."/>
            <person name="Hutchens S."/>
            <person name="Mercado J.M."/>
            <person name="Swaim C.D."/>
            <person name="Morrisett R.A."/>
            <person name="Bowman A.B."/>
            <person name="Aschner M."/>
            <person name="Mukhopadhyay S."/>
        </authorList>
    </citation>
    <scope>FUNCTION</scope>
    <scope>TRANSPORTER ACTIVITY</scope>
    <scope>SUBCELLULAR LOCATION</scope>
    <scope>MUTAGENESIS OF THR-196</scope>
    <scope>CHARACTERIZATION OF VARIANTS HMNDYT1 PRO-89 AND 105-ALA--PRO-107 DEL</scope>
</reference>
<reference key="11">
    <citation type="journal article" date="2015" name="Mol. Cell. Biol.">
        <title>The zinc finger protein ZNF658 regulates the transcription of genes involved in zinc homeostasis and affects ribosome biogenesis through the zinc transcriptional regulatory element.</title>
        <authorList>
            <person name="Ogo O.A."/>
            <person name="Tyson J."/>
            <person name="Cockell S.J."/>
            <person name="Howard A."/>
            <person name="Valentine R.A."/>
            <person name="Ford D."/>
        </authorList>
    </citation>
    <scope>INDUCTION</scope>
</reference>
<reference key="12">
    <citation type="journal article" date="2016" name="J. Biol. Chem.">
        <title>Direct comparison of manganese detoxification/efflux proteins and molecular characterization of ZnT10 protein as a manganese transporter.</title>
        <authorList>
            <person name="Nishito Y."/>
            <person name="Tsuji N."/>
            <person name="Fujishiro H."/>
            <person name="Takeda T.A."/>
            <person name="Yamazaki T."/>
            <person name="Teranishi F."/>
            <person name="Okazaki F."/>
            <person name="Matsunaga A."/>
            <person name="Tuschl K."/>
            <person name="Rao R."/>
            <person name="Kono S."/>
            <person name="Miyajima H."/>
            <person name="Narita H."/>
            <person name="Himeno S."/>
            <person name="Kambe T."/>
        </authorList>
    </citation>
    <scope>FUNCTION</scope>
    <scope>TRANSPORTER ACTIVITY</scope>
    <scope>SUBCELLULAR LOCATION</scope>
    <scope>MUTAGENESIS OF ASN-43; CYS-52 AND LEU-242</scope>
</reference>
<reference key="13">
    <citation type="journal article" date="2016" name="J. Biol. Chem.">
        <title>Structural elements in the transmembrane and cytoplasmic domains of the metal transporter SLC30A10 are required for its manganese efflux activity.</title>
        <authorList>
            <person name="Zogzas C.E."/>
            <person name="Aschner M."/>
            <person name="Mukhopadhyay S."/>
        </authorList>
    </citation>
    <scope>FUNCTION</scope>
    <scope>TRANSPORTER ACTIVITY</scope>
    <scope>SUBCELLULAR LOCATION</scope>
    <scope>MUTAGENESIS OF GLU-25; ASP-40; ASN-43; ASP-47; ASN-127; HIS-244; ASP-248; HIS-333 AND HIS-350</scope>
</reference>
<reference key="14">
    <citation type="journal article" date="2016" name="Traffic">
        <title>Differential targeting of SLC30A10/ZnT10 heterodimers to endolysosomal compartments modulates EGF-induced MEK/ERK1/2 activity.</title>
        <authorList>
            <person name="Zhao Y."/>
            <person name="Feresin R.G."/>
            <person name="Falcon-Perez J.M."/>
            <person name="Salazar G."/>
        </authorList>
    </citation>
    <scope>FUNCTION</scope>
    <scope>TRANSPORTER ACTIVITY</scope>
    <scope>SUBUNIT</scope>
    <scope>INTERACTION WITH SLC30A2; SLC30A3 AND SLC30A4</scope>
    <scope>SUBCELLULAR LOCATION</scope>
    <scope>MUTAGENESIS OF TYR-4</scope>
</reference>
<reference key="15">
    <citation type="journal article" date="2019" name="J. Biol. Chem.">
        <title>Zinc transporter 10 (ZnT10)-dependent extrusion of cellular Mn2+ is driven by an active Ca2+-coupled exchange.</title>
        <authorList>
            <person name="Levy M."/>
            <person name="Elkoshi N."/>
            <person name="Barber-Zucker S."/>
            <person name="Hoch E."/>
            <person name="Zarivach R."/>
            <person name="Hershfinkel M."/>
            <person name="Sekler I."/>
        </authorList>
    </citation>
    <scope>FUNCTION</scope>
    <scope>TRANSPORTER ACTIVITY</scope>
    <scope>MUTAGENESIS OF ASN-43; ASP-47; HIS-244 AND ASP-248</scope>
    <scope>SITE</scope>
</reference>
<keyword id="KW-0025">Alternative splicing</keyword>
<keyword id="KW-0050">Antiport</keyword>
<keyword id="KW-1003">Cell membrane</keyword>
<keyword id="KW-0225">Disease variant</keyword>
<keyword id="KW-1023">Dystonia</keyword>
<keyword id="KW-0967">Endosome</keyword>
<keyword id="KW-0333">Golgi apparatus</keyword>
<keyword id="KW-0406">Ion transport</keyword>
<keyword id="KW-0464">Manganese</keyword>
<keyword id="KW-0472">Membrane</keyword>
<keyword id="KW-0523">Neurodegeneration</keyword>
<keyword id="KW-0908">Parkinsonism</keyword>
<keyword id="KW-1267">Proteomics identification</keyword>
<keyword id="KW-1185">Reference proteome</keyword>
<keyword id="KW-0812">Transmembrane</keyword>
<keyword id="KW-1133">Transmembrane helix</keyword>
<keyword id="KW-0813">Transport</keyword>
<keyword id="KW-0862">Zinc</keyword>
<keyword id="KW-0864">Zinc transport</keyword>
<evidence type="ECO:0000255" key="1"/>
<evidence type="ECO:0000256" key="2">
    <source>
        <dbReference type="SAM" id="MobiDB-lite"/>
    </source>
</evidence>
<evidence type="ECO:0000269" key="3">
    <source>
    </source>
</evidence>
<evidence type="ECO:0000269" key="4">
    <source>
    </source>
</evidence>
<evidence type="ECO:0000269" key="5">
    <source>
    </source>
</evidence>
<evidence type="ECO:0000269" key="6">
    <source>
    </source>
</evidence>
<evidence type="ECO:0000269" key="7">
    <source>
    </source>
</evidence>
<evidence type="ECO:0000269" key="8">
    <source>
    </source>
</evidence>
<evidence type="ECO:0000269" key="9">
    <source>
    </source>
</evidence>
<evidence type="ECO:0000269" key="10">
    <source>
    </source>
</evidence>
<evidence type="ECO:0000269" key="11">
    <source>
    </source>
</evidence>
<evidence type="ECO:0000269" key="12">
    <source>
    </source>
</evidence>
<evidence type="ECO:0000269" key="13">
    <source>
    </source>
</evidence>
<evidence type="ECO:0000303" key="14">
    <source>
    </source>
</evidence>
<evidence type="ECO:0000303" key="15">
    <source>
    </source>
</evidence>
<evidence type="ECO:0000303" key="16">
    <source>
    </source>
</evidence>
<evidence type="ECO:0000303" key="17">
    <source ref="1"/>
</evidence>
<evidence type="ECO:0000305" key="18"/>
<evidence type="ECO:0000305" key="19">
    <source>
    </source>
</evidence>
<evidence type="ECO:0000312" key="20">
    <source>
        <dbReference type="HGNC" id="HGNC:25355"/>
    </source>
</evidence>
<protein>
    <recommendedName>
        <fullName evidence="19">Calcium/manganese antiporter SLC30A10</fullName>
    </recommendedName>
    <alternativeName>
        <fullName evidence="20">Solute carrier family 30 member 10</fullName>
    </alternativeName>
    <alternativeName>
        <fullName>Zinc transporter 10</fullName>
        <shortName>ZnT-10</shortName>
    </alternativeName>
</protein>
<organism>
    <name type="scientific">Homo sapiens</name>
    <name type="common">Human</name>
    <dbReference type="NCBI Taxonomy" id="9606"/>
    <lineage>
        <taxon>Eukaryota</taxon>
        <taxon>Metazoa</taxon>
        <taxon>Chordata</taxon>
        <taxon>Craniata</taxon>
        <taxon>Vertebrata</taxon>
        <taxon>Euteleostomi</taxon>
        <taxon>Mammalia</taxon>
        <taxon>Eutheria</taxon>
        <taxon>Euarchontoglires</taxon>
        <taxon>Primates</taxon>
        <taxon>Haplorrhini</taxon>
        <taxon>Catarrhini</taxon>
        <taxon>Hominidae</taxon>
        <taxon>Homo</taxon>
    </lineage>
</organism>
<dbReference type="EMBL" id="AY212919">
    <property type="protein sequence ID" value="AAP44332.1"/>
    <property type="status" value="ALT_SEQ"/>
    <property type="molecule type" value="mRNA"/>
</dbReference>
<dbReference type="EMBL" id="AL359609">
    <property type="protein sequence ID" value="CAB94880.1"/>
    <property type="molecule type" value="mRNA"/>
</dbReference>
<dbReference type="EMBL" id="AC093562">
    <property type="status" value="NOT_ANNOTATED_CDS"/>
    <property type="molecule type" value="Genomic_DNA"/>
</dbReference>
<dbReference type="EMBL" id="BC036078">
    <property type="protein sequence ID" value="AAH36078.1"/>
    <property type="molecule type" value="mRNA"/>
</dbReference>
<dbReference type="CCDS" id="CCDS31026.1">
    <molecule id="Q6XR72-4"/>
</dbReference>
<dbReference type="PIR" id="T50628">
    <property type="entry name" value="T50628"/>
</dbReference>
<dbReference type="RefSeq" id="NP_061183.2">
    <molecule id="Q6XR72-4"/>
    <property type="nucleotide sequence ID" value="NM_018713.2"/>
</dbReference>
<dbReference type="SMR" id="Q6XR72"/>
<dbReference type="BioGRID" id="120703">
    <property type="interactions" value="6"/>
</dbReference>
<dbReference type="ComplexPortal" id="CPX-8462">
    <property type="entry name" value="ZNT10 calcium-coupled manganese antiporter homodimer"/>
</dbReference>
<dbReference type="ComplexPortal" id="CPX-8463">
    <property type="entry name" value="ZNT2-ZNT10 proton-coupled zinc antiporter complex"/>
</dbReference>
<dbReference type="ComplexPortal" id="CPX-8464">
    <property type="entry name" value="ZNT3-ZNT10 proton-coupled zinc antiporter complex"/>
</dbReference>
<dbReference type="ComplexPortal" id="CPX-8465">
    <property type="entry name" value="ZNT4-ZNT10 proton-coupled zinc antiporter complex"/>
</dbReference>
<dbReference type="FunCoup" id="Q6XR72">
    <property type="interactions" value="245"/>
</dbReference>
<dbReference type="IntAct" id="Q6XR72">
    <property type="interactions" value="4"/>
</dbReference>
<dbReference type="STRING" id="9606.ENSP00000355893"/>
<dbReference type="DrugBank" id="DB06757">
    <property type="generic name" value="Manganese cation"/>
</dbReference>
<dbReference type="DrugBank" id="DB14533">
    <property type="generic name" value="Zinc chloride"/>
</dbReference>
<dbReference type="DrugBank" id="DB14548">
    <property type="generic name" value="Zinc sulfate, unspecified form"/>
</dbReference>
<dbReference type="TCDB" id="2.A.4.2.5">
    <property type="family name" value="the cation diffusion facilitator (cdf) family"/>
</dbReference>
<dbReference type="GlyGen" id="Q6XR72">
    <property type="glycosylation" value="1 site"/>
</dbReference>
<dbReference type="iPTMnet" id="Q6XR72"/>
<dbReference type="PhosphoSitePlus" id="Q6XR72"/>
<dbReference type="BioMuta" id="SLC30A10"/>
<dbReference type="DMDM" id="311033506"/>
<dbReference type="jPOST" id="Q6XR72"/>
<dbReference type="MassIVE" id="Q6XR72"/>
<dbReference type="PaxDb" id="9606-ENSP00000355893"/>
<dbReference type="PeptideAtlas" id="Q6XR72"/>
<dbReference type="ProteomicsDB" id="67813">
    <molecule id="Q6XR72-4"/>
</dbReference>
<dbReference type="ProteomicsDB" id="67814">
    <molecule id="Q6XR72-2"/>
</dbReference>
<dbReference type="ProteomicsDB" id="67815">
    <molecule id="Q6XR72-3"/>
</dbReference>
<dbReference type="Antibodypedia" id="3072">
    <property type="antibodies" value="117 antibodies from 18 providers"/>
</dbReference>
<dbReference type="DNASU" id="55532"/>
<dbReference type="Ensembl" id="ENST00000356609.2">
    <molecule id="Q6XR72-3"/>
    <property type="protein sequence ID" value="ENSP00000349018.2"/>
    <property type="gene ID" value="ENSG00000196660.12"/>
</dbReference>
<dbReference type="Ensembl" id="ENST00000366926.4">
    <molecule id="Q6XR72-4"/>
    <property type="protein sequence ID" value="ENSP00000355893.4"/>
    <property type="gene ID" value="ENSG00000196660.12"/>
</dbReference>
<dbReference type="GeneID" id="55532"/>
<dbReference type="KEGG" id="hsa:55532"/>
<dbReference type="MANE-Select" id="ENST00000366926.4">
    <property type="protein sequence ID" value="ENSP00000355893.4"/>
    <property type="RefSeq nucleotide sequence ID" value="NM_018713.3"/>
    <property type="RefSeq protein sequence ID" value="NP_061183.2"/>
</dbReference>
<dbReference type="UCSC" id="uc001hlw.4">
    <molecule id="Q6XR72-4"/>
    <property type="organism name" value="human"/>
</dbReference>
<dbReference type="AGR" id="HGNC:25355"/>
<dbReference type="CTD" id="55532"/>
<dbReference type="DisGeNET" id="55532"/>
<dbReference type="GeneCards" id="SLC30A10"/>
<dbReference type="GeneReviews" id="SLC30A10"/>
<dbReference type="HGNC" id="HGNC:25355">
    <property type="gene designation" value="SLC30A10"/>
</dbReference>
<dbReference type="HPA" id="ENSG00000196660">
    <property type="expression patterns" value="Group enriched (intestine, liver)"/>
</dbReference>
<dbReference type="MalaCards" id="SLC30A10"/>
<dbReference type="MIM" id="611146">
    <property type="type" value="gene"/>
</dbReference>
<dbReference type="MIM" id="613280">
    <property type="type" value="phenotype"/>
</dbReference>
<dbReference type="neXtProt" id="NX_Q6XR72"/>
<dbReference type="OpenTargets" id="ENSG00000196660"/>
<dbReference type="Orphanet" id="309854">
    <property type="disease" value="Cirrhosis-dystonia-polycythemia-hypermanganesemia syndrome"/>
</dbReference>
<dbReference type="PharmGKB" id="PA142670903"/>
<dbReference type="VEuPathDB" id="HostDB:ENSG00000196660"/>
<dbReference type="eggNOG" id="KOG1483">
    <property type="taxonomic scope" value="Eukaryota"/>
</dbReference>
<dbReference type="GeneTree" id="ENSGT00940000159967"/>
<dbReference type="HOGENOM" id="CLU_1239780_0_0_1"/>
<dbReference type="InParanoid" id="Q6XR72"/>
<dbReference type="OMA" id="FQDCASW"/>
<dbReference type="OrthoDB" id="29444at2759"/>
<dbReference type="PAN-GO" id="Q6XR72">
    <property type="GO annotations" value="6 GO annotations based on evolutionary models"/>
</dbReference>
<dbReference type="PhylomeDB" id="Q6XR72"/>
<dbReference type="TreeFam" id="TF313924"/>
<dbReference type="PathwayCommons" id="Q6XR72"/>
<dbReference type="Reactome" id="R-HSA-425410">
    <property type="pathway name" value="Metal ion SLC transporters"/>
</dbReference>
<dbReference type="SignaLink" id="Q6XR72"/>
<dbReference type="BioGRID-ORCS" id="55532">
    <property type="hits" value="11 hits in 1155 CRISPR screens"/>
</dbReference>
<dbReference type="ChiTaRS" id="SLC30A10">
    <property type="organism name" value="human"/>
</dbReference>
<dbReference type="GenomeRNAi" id="55532"/>
<dbReference type="Pharos" id="Q6XR72">
    <property type="development level" value="Tbio"/>
</dbReference>
<dbReference type="PRO" id="PR:Q6XR72"/>
<dbReference type="Proteomes" id="UP000005640">
    <property type="component" value="Chromosome 1"/>
</dbReference>
<dbReference type="RNAct" id="Q6XR72">
    <property type="molecule type" value="protein"/>
</dbReference>
<dbReference type="Bgee" id="ENSG00000196660">
    <property type="expression patterns" value="Expressed in jejunal mucosa and 75 other cell types or tissues"/>
</dbReference>
<dbReference type="GO" id="GO:0005769">
    <property type="term" value="C:early endosome"/>
    <property type="evidence" value="ECO:0000314"/>
    <property type="project" value="UniProtKB"/>
</dbReference>
<dbReference type="GO" id="GO:0031901">
    <property type="term" value="C:early endosome membrane"/>
    <property type="evidence" value="ECO:0000314"/>
    <property type="project" value="UniProtKB"/>
</dbReference>
<dbReference type="GO" id="GO:0005794">
    <property type="term" value="C:Golgi apparatus"/>
    <property type="evidence" value="ECO:0000314"/>
    <property type="project" value="UniProtKB"/>
</dbReference>
<dbReference type="GO" id="GO:0000139">
    <property type="term" value="C:Golgi membrane"/>
    <property type="evidence" value="ECO:0007669"/>
    <property type="project" value="UniProtKB-SubCell"/>
</dbReference>
<dbReference type="GO" id="GO:0016020">
    <property type="term" value="C:membrane"/>
    <property type="evidence" value="ECO:0000318"/>
    <property type="project" value="GO_Central"/>
</dbReference>
<dbReference type="GO" id="GO:0005886">
    <property type="term" value="C:plasma membrane"/>
    <property type="evidence" value="ECO:0000314"/>
    <property type="project" value="UniProtKB"/>
</dbReference>
<dbReference type="GO" id="GO:0055037">
    <property type="term" value="C:recycling endosome"/>
    <property type="evidence" value="ECO:0000314"/>
    <property type="project" value="UniProtKB"/>
</dbReference>
<dbReference type="GO" id="GO:0055038">
    <property type="term" value="C:recycling endosome membrane"/>
    <property type="evidence" value="ECO:0000314"/>
    <property type="project" value="UniProtKB"/>
</dbReference>
<dbReference type="GO" id="GO:0140983">
    <property type="term" value="F:calcium:manganese antiporter activity"/>
    <property type="evidence" value="ECO:0000314"/>
    <property type="project" value="UniProtKB"/>
</dbReference>
<dbReference type="GO" id="GO:0005384">
    <property type="term" value="F:manganese ion transmembrane transporter activity"/>
    <property type="evidence" value="ECO:0000314"/>
    <property type="project" value="UniProtKB"/>
</dbReference>
<dbReference type="GO" id="GO:0005385">
    <property type="term" value="F:zinc ion transmembrane transporter activity"/>
    <property type="evidence" value="ECO:0000314"/>
    <property type="project" value="UniProtKB"/>
</dbReference>
<dbReference type="GO" id="GO:1904385">
    <property type="term" value="P:cellular response to angiotensin"/>
    <property type="evidence" value="ECO:0000314"/>
    <property type="project" value="UniProtKB"/>
</dbReference>
<dbReference type="GO" id="GO:0010312">
    <property type="term" value="P:detoxification of zinc ion"/>
    <property type="evidence" value="ECO:0000318"/>
    <property type="project" value="GO_Central"/>
</dbReference>
<dbReference type="GO" id="GO:0007173">
    <property type="term" value="P:epidermal growth factor receptor signaling pathway"/>
    <property type="evidence" value="ECO:0000314"/>
    <property type="project" value="UniProtKB"/>
</dbReference>
<dbReference type="GO" id="GO:0030026">
    <property type="term" value="P:intracellular manganese ion homeostasis"/>
    <property type="evidence" value="ECO:0000314"/>
    <property type="project" value="UniProtKB"/>
</dbReference>
<dbReference type="GO" id="GO:0006882">
    <property type="term" value="P:intracellular zinc ion homeostasis"/>
    <property type="evidence" value="ECO:0000314"/>
    <property type="project" value="UniProtKB"/>
</dbReference>
<dbReference type="GO" id="GO:0140048">
    <property type="term" value="P:manganese ion export across plasma membrane"/>
    <property type="evidence" value="ECO:0000314"/>
    <property type="project" value="UniProtKB"/>
</dbReference>
<dbReference type="GO" id="GO:0006828">
    <property type="term" value="P:manganese ion transport"/>
    <property type="evidence" value="ECO:0000315"/>
    <property type="project" value="UniProtKB"/>
</dbReference>
<dbReference type="GO" id="GO:0070374">
    <property type="term" value="P:positive regulation of ERK1 and ERK2 cascade"/>
    <property type="evidence" value="ECO:0000314"/>
    <property type="project" value="UniProtKB"/>
</dbReference>
<dbReference type="GO" id="GO:0062111">
    <property type="term" value="P:zinc ion import into organelle"/>
    <property type="evidence" value="ECO:0000314"/>
    <property type="project" value="UniProtKB"/>
</dbReference>
<dbReference type="GO" id="GO:0071577">
    <property type="term" value="P:zinc ion transmembrane transport"/>
    <property type="evidence" value="ECO:0000318"/>
    <property type="project" value="GO_Central"/>
</dbReference>
<dbReference type="Gene3D" id="1.20.1510.10">
    <property type="entry name" value="Cation efflux protein transmembrane domain"/>
    <property type="match status" value="1"/>
</dbReference>
<dbReference type="InterPro" id="IPR002524">
    <property type="entry name" value="Cation_efflux"/>
</dbReference>
<dbReference type="InterPro" id="IPR027469">
    <property type="entry name" value="Cation_efflux_TMD_sf"/>
</dbReference>
<dbReference type="NCBIfam" id="TIGR01297">
    <property type="entry name" value="CDF"/>
    <property type="match status" value="1"/>
</dbReference>
<dbReference type="PANTHER" id="PTHR45820:SF3">
    <property type="entry name" value="CALCIUM_MANGANESE ANTIPORTER SLC30A10"/>
    <property type="match status" value="1"/>
</dbReference>
<dbReference type="PANTHER" id="PTHR45820">
    <property type="entry name" value="FI23527P1"/>
    <property type="match status" value="1"/>
</dbReference>
<dbReference type="Pfam" id="PF01545">
    <property type="entry name" value="Cation_efflux"/>
    <property type="match status" value="1"/>
</dbReference>
<dbReference type="SUPFAM" id="SSF161111">
    <property type="entry name" value="Cation efflux protein transmembrane domain-like"/>
    <property type="match status" value="1"/>
</dbReference>
<feature type="chain" id="PRO_0000312580" description="Calcium/manganese antiporter SLC30A10">
    <location>
        <begin position="1"/>
        <end position="485"/>
    </location>
</feature>
<feature type="topological domain" description="Cytoplasmic" evidence="1">
    <location>
        <begin position="1"/>
        <end position="10"/>
    </location>
</feature>
<feature type="transmembrane region" description="Helical" evidence="1">
    <location>
        <begin position="11"/>
        <end position="31"/>
    </location>
</feature>
<feature type="topological domain" description="Extracellular" evidence="1">
    <location>
        <begin position="32"/>
        <end position="40"/>
    </location>
</feature>
<feature type="transmembrane region" description="Helical" evidence="1">
    <location>
        <begin position="41"/>
        <end position="61"/>
    </location>
</feature>
<feature type="topological domain" description="Cytoplasmic" evidence="1">
    <location>
        <begin position="62"/>
        <end position="81"/>
    </location>
</feature>
<feature type="transmembrane region" description="Helical" evidence="1">
    <location>
        <begin position="82"/>
        <end position="102"/>
    </location>
</feature>
<feature type="topological domain" description="Extracellular" evidence="1">
    <location>
        <begin position="103"/>
        <end position="113"/>
    </location>
</feature>
<feature type="transmembrane region" description="Helical" evidence="1">
    <location>
        <begin position="114"/>
        <end position="134"/>
    </location>
</feature>
<feature type="topological domain" description="Cytoplasmic" evidence="1">
    <location>
        <begin position="135"/>
        <end position="244"/>
    </location>
</feature>
<feature type="transmembrane region" description="Helical" evidence="1">
    <location>
        <begin position="245"/>
        <end position="265"/>
    </location>
</feature>
<feature type="topological domain" description="Extracellular" evidence="1">
    <location>
        <begin position="266"/>
        <end position="278"/>
    </location>
</feature>
<feature type="transmembrane region" description="Helical" evidence="1">
    <location>
        <begin position="279"/>
        <end position="299"/>
    </location>
</feature>
<feature type="topological domain" description="Cytoplasmic" evidence="1">
    <location>
        <begin position="300"/>
        <end position="485"/>
    </location>
</feature>
<feature type="region of interest" description="Disordered" evidence="2">
    <location>
        <begin position="167"/>
        <end position="196"/>
    </location>
</feature>
<feature type="region of interest" description="Required for plasma membrane localization" evidence="8">
    <location>
        <begin position="308"/>
        <end position="485"/>
    </location>
</feature>
<feature type="site" description="Important for coupling of manganese to calcium transport" evidence="13">
    <location>
        <position position="43"/>
    </location>
</feature>
<feature type="splice variant" id="VSP_029863" description="In isoform 2." evidence="15">
    <location>
        <begin position="1"/>
        <end position="245"/>
    </location>
</feature>
<feature type="splice variant" id="VSP_029864" description="In isoform 3." evidence="14">
    <original>GDSFNTQNEP</original>
    <variation>ELIHNTRFLL</variation>
    <location>
        <begin position="214"/>
        <end position="223"/>
    </location>
</feature>
<feature type="splice variant" id="VSP_029865" description="In isoform 3." evidence="14">
    <location>
        <begin position="224"/>
        <end position="485"/>
    </location>
</feature>
<feature type="sequence variant" id="VAR_072573" description="In HMNDYT1; loss of localization to the plasma membrane; retained in the endoplasmic reticulum; increased proteasomal degradation; loss of function in intracellular manganese ion homeostasis; dbSNP:rs281860284." evidence="5 8">
    <original>L</original>
    <variation>P</variation>
    <location>
        <position position="89"/>
    </location>
</feature>
<feature type="sequence variant" id="VAR_072574" description="In HMNDYT1; loss of localization to the plasma membrane; retained in the endoplasmic reticulum; increased proteasomal degradation; decreased function in intracellular manganese ion homeostasis." evidence="5 8">
    <location>
        <begin position="105"/>
        <end position="107"/>
    </location>
</feature>
<feature type="sequence variant" id="VAR_072575" description="In dbSNP:rs281860286." evidence="4">
    <original>F</original>
    <variation>S</variation>
    <location>
        <position position="167"/>
    </location>
</feature>
<feature type="sequence variant" id="VAR_072576" description="In HMNDYT1." evidence="5">
    <location>
        <position position="256"/>
    </location>
</feature>
<feature type="sequence variant" id="VAR_072577" description="In HMNDYT1; dbSNP:rs281860291." evidence="5">
    <original>L</original>
    <variation>P</variation>
    <location>
        <position position="349"/>
    </location>
</feature>
<feature type="mutagenesis site" description="Decreased interaction with SLC30A3. No effect on self-association. Decreased zinc ion transmembrane transporter activity. Decreased EGF-induced ERK1/2 phosphorylation." evidence="10">
    <original>Y</original>
    <variation>F</variation>
    <location>
        <position position="4"/>
    </location>
</feature>
<feature type="mutagenesis site" description="No effect on localization to the plasma membrane. Loss of calcium:manganese antiporter activity." evidence="12">
    <original>E</original>
    <variation>A</variation>
    <location>
        <position position="25"/>
    </location>
</feature>
<feature type="mutagenesis site" description="No effect on localization to the plasma membrane. Loss of calcium:manganese antiporter activity." evidence="12">
    <original>D</original>
    <variation>A</variation>
    <location>
        <position position="40"/>
    </location>
</feature>
<feature type="mutagenesis site" description="No effect on localization to the plasma membrane. Changed calcium:manganese antiporter activity. Enhanced coupling between manganese and calcium exchange." evidence="12 13">
    <original>N</original>
    <variation>A</variation>
    <location>
        <position position="43"/>
    </location>
</feature>
<feature type="mutagenesis site" description="Loss of calcium:manganese antiporter activity." evidence="13">
    <original>N</original>
    <variation>D</variation>
    <location>
        <position position="43"/>
    </location>
</feature>
<feature type="mutagenesis site" description="No effect on localization to the plasma membrane. Loss of calcium:manganese antiporter activity. Loss of calcium:manganese antiporter activity and increased zinc ion transmembrane transporter activity; when associated with V-52 and F-242." evidence="11 13">
    <original>N</original>
    <variation>H</variation>
    <location>
        <position position="43"/>
    </location>
</feature>
<feature type="mutagenesis site" description="Loss of calcium:manganese antiporter activity. Uncoupling between manganese and calcium exchange." evidence="13">
    <original>N</original>
    <variation>T</variation>
    <location>
        <position position="43"/>
    </location>
</feature>
<feature type="mutagenesis site" description="No effect on localization to the plasma membrane. No effect on calcium:manganese antiporter activity." evidence="12">
    <original>D</original>
    <variation>A</variation>
    <location>
        <position position="47"/>
    </location>
</feature>
<feature type="mutagenesis site" description="Loss of calcium:manganese antiporter activity." evidence="13">
    <original>D</original>
    <variation>E</variation>
    <location>
        <position position="47"/>
    </location>
</feature>
<feature type="mutagenesis site" description="Loss of calcium:manganese antiporter activity and increased zinc ion transmembrane transporter activity; when associated with H-43 and F-242." evidence="11">
    <original>C</original>
    <variation>V</variation>
    <location>
        <position position="52"/>
    </location>
</feature>
<feature type="mutagenesis site" description="No effect on localization to the plasma membrane. No effect on localization to the plasma membrane and decreased calcium:manganese antiporter activity; when associated with A-244." evidence="12">
    <original>N</original>
    <variation>A</variation>
    <location>
        <position position="127"/>
    </location>
</feature>
<feature type="mutagenesis site" description="Loss of localization to the plasma membrane." evidence="8">
    <original>T</original>
    <variation>P</variation>
    <location>
        <position position="196"/>
    </location>
</feature>
<feature type="mutagenesis site" description="Loss of calcium:manganese antiporter activity and increased zinc ion transmembrane transporter activity; when associated with H-43 and V-52." evidence="11">
    <original>L</original>
    <variation>F</variation>
    <location>
        <position position="242"/>
    </location>
</feature>
<feature type="mutagenesis site" description="No effect on localization to the plasma membrane. No effect on localization to the plasma membrane and decreased calcium:manganese antiporter activity; when associated with A-127." evidence="12">
    <original>H</original>
    <variation>A</variation>
    <location>
        <position position="244"/>
    </location>
</feature>
<feature type="mutagenesis site" description="Loss of calcium:manganese antiporter activity." evidence="13">
    <original>H</original>
    <variation>D</variation>
    <location>
        <position position="244"/>
    </location>
</feature>
<feature type="mutagenesis site" description="No effect on localization to the plasma membrane. Loss of manganese ion export across plasma membrane." evidence="12">
    <original>D</original>
    <variation>A</variation>
    <location>
        <position position="248"/>
    </location>
</feature>
<feature type="mutagenesis site" description="Decreased calcium:manganese antiporter activity." evidence="12">
    <original>H</original>
    <variation>A</variation>
    <location>
        <position position="333"/>
    </location>
</feature>
<feature type="mutagenesis site" description="Decreased calcium:manganese antiporter activity." evidence="12">
    <original>H</original>
    <variation>A</variation>
    <location>
        <position position="350"/>
    </location>
</feature>
<comment type="function">
    <text evidence="5 6 8 10 11 12 13">Calcium:manganese antiporter of the plasma membrane mediating the efflux of intracellular manganese coupled to an active extracellular calcium exchange (PubMed:30755481). Required for intracellular manganese homeostasis, an essential cation for the function of several enzymes, including some crucially important for the metabolism of neurotransmitters and other neuronal metabolic pathways. Manganese can also be cytotoxic and induce oxidative stress, mitochondrial dysfunction and apoptosis (PubMed:22341972, PubMed:25319704, PubMed:26728129, PubMed:27226609, PubMed:27307044). Could also have an intracellular zinc ion transporter activity, directly regulating intracellular zinc ion homeostasis and more indirectly various signaling pathway and biological processes (PubMed:22427991, PubMed:26728129).</text>
</comment>
<comment type="catalytic activity">
    <reaction evidence="8 11 12 13">
        <text>Mn(2+)(out) + Ca(2+)(in) = Mn(2+)(in) + Ca(2+)(out)</text>
        <dbReference type="Rhea" id="RHEA:73059"/>
        <dbReference type="ChEBI" id="CHEBI:29035"/>
        <dbReference type="ChEBI" id="CHEBI:29108"/>
    </reaction>
</comment>
<comment type="catalytic activity">
    <reaction evidence="6 10">
        <text>Zn(2+)(in) = Zn(2+)(out)</text>
        <dbReference type="Rhea" id="RHEA:29351"/>
        <dbReference type="ChEBI" id="CHEBI:29105"/>
    </reaction>
</comment>
<comment type="subunit">
    <text evidence="6 10">Forms homodimers. Forms heterodimers and high-molecular weight oligomers with SLC30A3, SLC30A2 and SLC30A4; heterodimerization is mediated by covalent-bound tyrosine residues, occurs probably in a tissue-specific manner and could mediate the intracellular zinc transport activity into early endosomes and recycling endosomes.</text>
</comment>
<comment type="interaction">
    <interactant intactId="EBI-13917996">
        <id>Q6XR72</id>
    </interactant>
    <interactant intactId="EBI-8644112">
        <id>Q9BRI3</id>
        <label>SLC30A2</label>
    </interactant>
    <organismsDiffer>false</organismsDiffer>
    <experiments>3</experiments>
</comment>
<comment type="interaction">
    <interactant intactId="EBI-13917996">
        <id>Q6XR72</id>
    </interactant>
    <interactant intactId="EBI-10294651">
        <id>Q99726</id>
        <label>SLC30A3</label>
    </interactant>
    <organismsDiffer>false</organismsDiffer>
    <experiments>3</experiments>
</comment>
<comment type="interaction">
    <interactant intactId="EBI-13917996">
        <id>Q6XR72</id>
    </interactant>
    <interactant intactId="EBI-13918058">
        <id>O14863</id>
        <label>SLC30A4</label>
    </interactant>
    <organismsDiffer>false</organismsDiffer>
    <experiments>2</experiments>
</comment>
<comment type="subcellular location">
    <subcellularLocation>
        <location evidence="7 8 10 11 12">Cell membrane</location>
        <topology evidence="1">Multi-pass membrane protein</topology>
    </subcellularLocation>
    <subcellularLocation>
        <location evidence="7 11">Golgi apparatus membrane</location>
        <topology evidence="1">Multi-pass membrane protein</topology>
    </subcellularLocation>
    <subcellularLocation>
        <location evidence="6 10">Recycling endosome membrane</location>
    </subcellularLocation>
    <subcellularLocation>
        <location evidence="6 10">Early endosome membrane</location>
        <topology evidence="1">Multi-pass membrane protein</topology>
    </subcellularLocation>
    <text evidence="7">Localization to the Golgi and plasma membrane is regulated by zinc.</text>
</comment>
<comment type="alternative products">
    <event type="alternative splicing"/>
    <isoform>
        <id>Q6XR72-4</id>
        <name>1</name>
        <sequence type="displayed"/>
    </isoform>
    <isoform>
        <id>Q6XR72-2</id>
        <name>2</name>
        <sequence type="described" ref="VSP_029863"/>
    </isoform>
    <isoform>
        <id>Q6XR72-3</id>
        <name>3</name>
        <sequence type="described" ref="VSP_029864 VSP_029865"/>
    </isoform>
</comment>
<comment type="tissue specificity">
    <text evidence="3 4 7">Specifically expressed in fetal liver and fetal brain (PubMed:15154973). Expressed in adult tissues with relative levels small intestine &gt; liver &gt; testes &gt; brain &gt; ovary &gt; colon &gt; cervix &gt; prostate &gt; placenta (PubMed:22706290). Expressed in liver and neurons of the nervous system (at protein level) (PubMed:22341971).</text>
</comment>
<comment type="induction">
    <text evidence="4 6 7 9">Down-regulated by zinc (PubMed:22427991, PubMed:22706290, PubMed:25582195). Down-regulated by angiotensin-2 (PubMed:22427991). Up-regulated by manganese (PubMed:22341971).</text>
</comment>
<comment type="disease" evidence="4 5 8">
    <disease id="DI-04212">
        <name>Hypermanganesemia with dystonia 1</name>
        <acronym>HMNDYT1</acronym>
        <description>A metabolic autosomal recessive disorder characterized by dystonia, parkinsonism, extrapyramidal signs, severe hypermanganesemia, polycythemia, and chronic hepatic disease, including steatosis and cirrhosis.</description>
        <dbReference type="MIM" id="613280"/>
    </disease>
    <text>The disease is caused by variants affecting the gene represented in this entry.</text>
</comment>
<comment type="miscellaneous">
    <molecule>Isoform 2</molecule>
    <text evidence="18">May be produced at very low levels due to a premature stop codon in the mRNA, leading to nonsense-mediated mRNA decay.</text>
</comment>
<comment type="similarity">
    <text evidence="18">Belongs to the cation diffusion facilitator (CDF) transporter (TC 2.A.4) family. SLC30A subfamily.</text>
</comment>
<comment type="sequence caution" evidence="18">
    <conflict type="miscellaneous discrepancy">
        <sequence resource="EMBL-CDS" id="AAP44332"/>
    </conflict>
    <text>Contaminating sequence. Sequence of unknown origin in position 427.</text>
</comment>
<proteinExistence type="evidence at protein level"/>
<gene>
    <name evidence="20" type="primary">SLC30A10</name>
    <name evidence="16" type="synonym">ZNT10</name>
    <name evidence="17" type="synonym">ZNT8</name>
</gene>